<organism>
    <name type="scientific">Dictyostelium discoideum</name>
    <name type="common">Social amoeba</name>
    <dbReference type="NCBI Taxonomy" id="44689"/>
    <lineage>
        <taxon>Eukaryota</taxon>
        <taxon>Amoebozoa</taxon>
        <taxon>Evosea</taxon>
        <taxon>Eumycetozoa</taxon>
        <taxon>Dictyostelia</taxon>
        <taxon>Dictyosteliales</taxon>
        <taxon>Dictyosteliaceae</taxon>
        <taxon>Dictyostelium</taxon>
    </lineage>
</organism>
<reference key="1">
    <citation type="journal article" date="2002" name="Nature">
        <title>Sequence and analysis of chromosome 2 of Dictyostelium discoideum.</title>
        <authorList>
            <person name="Gloeckner G."/>
            <person name="Eichinger L."/>
            <person name="Szafranski K."/>
            <person name="Pachebat J.A."/>
            <person name="Bankier A.T."/>
            <person name="Dear P.H."/>
            <person name="Lehmann R."/>
            <person name="Baumgart C."/>
            <person name="Parra G."/>
            <person name="Abril J.F."/>
            <person name="Guigo R."/>
            <person name="Kumpf K."/>
            <person name="Tunggal B."/>
            <person name="Cox E.C."/>
            <person name="Quail M.A."/>
            <person name="Platzer M."/>
            <person name="Rosenthal A."/>
            <person name="Noegel A.A."/>
        </authorList>
    </citation>
    <scope>NUCLEOTIDE SEQUENCE [LARGE SCALE GENOMIC DNA]</scope>
    <source>
        <strain>AX4</strain>
    </source>
</reference>
<reference key="2">
    <citation type="journal article" date="2005" name="Nature">
        <title>The genome of the social amoeba Dictyostelium discoideum.</title>
        <authorList>
            <person name="Eichinger L."/>
            <person name="Pachebat J.A."/>
            <person name="Gloeckner G."/>
            <person name="Rajandream M.A."/>
            <person name="Sucgang R."/>
            <person name="Berriman M."/>
            <person name="Song J."/>
            <person name="Olsen R."/>
            <person name="Szafranski K."/>
            <person name="Xu Q."/>
            <person name="Tunggal B."/>
            <person name="Kummerfeld S."/>
            <person name="Madera M."/>
            <person name="Konfortov B.A."/>
            <person name="Rivero F."/>
            <person name="Bankier A.T."/>
            <person name="Lehmann R."/>
            <person name="Hamlin N."/>
            <person name="Davies R."/>
            <person name="Gaudet P."/>
            <person name="Fey P."/>
            <person name="Pilcher K."/>
            <person name="Chen G."/>
            <person name="Saunders D."/>
            <person name="Sodergren E.J."/>
            <person name="Davis P."/>
            <person name="Kerhornou A."/>
            <person name="Nie X."/>
            <person name="Hall N."/>
            <person name="Anjard C."/>
            <person name="Hemphill L."/>
            <person name="Bason N."/>
            <person name="Farbrother P."/>
            <person name="Desany B."/>
            <person name="Just E."/>
            <person name="Morio T."/>
            <person name="Rost R."/>
            <person name="Churcher C.M."/>
            <person name="Cooper J."/>
            <person name="Haydock S."/>
            <person name="van Driessche N."/>
            <person name="Cronin A."/>
            <person name="Goodhead I."/>
            <person name="Muzny D.M."/>
            <person name="Mourier T."/>
            <person name="Pain A."/>
            <person name="Lu M."/>
            <person name="Harper D."/>
            <person name="Lindsay R."/>
            <person name="Hauser H."/>
            <person name="James K.D."/>
            <person name="Quiles M."/>
            <person name="Madan Babu M."/>
            <person name="Saito T."/>
            <person name="Buchrieser C."/>
            <person name="Wardroper A."/>
            <person name="Felder M."/>
            <person name="Thangavelu M."/>
            <person name="Johnson D."/>
            <person name="Knights A."/>
            <person name="Loulseged H."/>
            <person name="Mungall K.L."/>
            <person name="Oliver K."/>
            <person name="Price C."/>
            <person name="Quail M.A."/>
            <person name="Urushihara H."/>
            <person name="Hernandez J."/>
            <person name="Rabbinowitsch E."/>
            <person name="Steffen D."/>
            <person name="Sanders M."/>
            <person name="Ma J."/>
            <person name="Kohara Y."/>
            <person name="Sharp S."/>
            <person name="Simmonds M.N."/>
            <person name="Spiegler S."/>
            <person name="Tivey A."/>
            <person name="Sugano S."/>
            <person name="White B."/>
            <person name="Walker D."/>
            <person name="Woodward J.R."/>
            <person name="Winckler T."/>
            <person name="Tanaka Y."/>
            <person name="Shaulsky G."/>
            <person name="Schleicher M."/>
            <person name="Weinstock G.M."/>
            <person name="Rosenthal A."/>
            <person name="Cox E.C."/>
            <person name="Chisholm R.L."/>
            <person name="Gibbs R.A."/>
            <person name="Loomis W.F."/>
            <person name="Platzer M."/>
            <person name="Kay R.R."/>
            <person name="Williams J.G."/>
            <person name="Dear P.H."/>
            <person name="Noegel A.A."/>
            <person name="Barrell B.G."/>
            <person name="Kuspa A."/>
        </authorList>
    </citation>
    <scope>NUCLEOTIDE SEQUENCE [LARGE SCALE GENOMIC DNA]</scope>
    <source>
        <strain>AX4</strain>
    </source>
</reference>
<name>TPC10_DICDI</name>
<accession>Q556Z3</accession>
<accession>Q86AI7</accession>
<evidence type="ECO:0000250" key="1"/>
<evidence type="ECO:0000256" key="2">
    <source>
        <dbReference type="SAM" id="MobiDB-lite"/>
    </source>
</evidence>
<evidence type="ECO:0000305" key="3"/>
<protein>
    <recommendedName>
        <fullName>Trafficking protein particle complex subunit 10</fullName>
    </recommendedName>
    <alternativeName>
        <fullName>Trafficking protein particle complex subunit TMEM1</fullName>
    </alternativeName>
    <alternativeName>
        <fullName>Transport protein particle subunit TMEM1</fullName>
        <shortName>TRAPP subunit TMEM1</shortName>
    </alternativeName>
</protein>
<proteinExistence type="inferred from homology"/>
<keyword id="KW-0931">ER-Golgi transport</keyword>
<keyword id="KW-0333">Golgi apparatus</keyword>
<keyword id="KW-1185">Reference proteome</keyword>
<keyword id="KW-0813">Transport</keyword>
<gene>
    <name type="primary">trapcc10-1</name>
    <name type="synonym">tmem1-1</name>
    <name type="ORF">DDB_G0273209</name>
</gene>
<gene>
    <name type="primary">trapcc10-2</name>
    <name type="synonym">tmem1-2</name>
    <name type="ORF">DDB_G0273719</name>
</gene>
<feature type="chain" id="PRO_0000331481" description="Trafficking protein particle complex subunit 10">
    <location>
        <begin position="1"/>
        <end position="1442"/>
    </location>
</feature>
<feature type="region of interest" description="Disordered" evidence="2">
    <location>
        <begin position="1"/>
        <end position="86"/>
    </location>
</feature>
<feature type="region of interest" description="Disordered" evidence="2">
    <location>
        <begin position="251"/>
        <end position="277"/>
    </location>
</feature>
<feature type="region of interest" description="Disordered" evidence="2">
    <location>
        <begin position="535"/>
        <end position="564"/>
    </location>
</feature>
<feature type="region of interest" description="Disordered" evidence="2">
    <location>
        <begin position="1208"/>
        <end position="1238"/>
    </location>
</feature>
<feature type="region of interest" description="Disordered" evidence="2">
    <location>
        <begin position="1316"/>
        <end position="1335"/>
    </location>
</feature>
<feature type="region of interest" description="Disordered" evidence="2">
    <location>
        <begin position="1422"/>
        <end position="1442"/>
    </location>
</feature>
<feature type="compositionally biased region" description="Polar residues" evidence="2">
    <location>
        <begin position="1"/>
        <end position="23"/>
    </location>
</feature>
<feature type="compositionally biased region" description="Low complexity" evidence="2">
    <location>
        <begin position="39"/>
        <end position="86"/>
    </location>
</feature>
<feature type="compositionally biased region" description="Low complexity" evidence="2">
    <location>
        <begin position="535"/>
        <end position="553"/>
    </location>
</feature>
<feature type="compositionally biased region" description="Polar residues" evidence="2">
    <location>
        <begin position="554"/>
        <end position="564"/>
    </location>
</feature>
<feature type="compositionally biased region" description="Low complexity" evidence="2">
    <location>
        <begin position="1208"/>
        <end position="1236"/>
    </location>
</feature>
<feature type="compositionally biased region" description="Low complexity" evidence="2">
    <location>
        <begin position="1425"/>
        <end position="1442"/>
    </location>
</feature>
<comment type="function">
    <text evidence="1">May play a role in vesicular transport from endoplasmic reticulum to Golgi.</text>
</comment>
<comment type="subunit">
    <text evidence="1">Part of the multisubunit TRAPP (transport protein particle) complex.</text>
</comment>
<comment type="subcellular location">
    <subcellularLocation>
        <location evidence="1">Golgi apparatus</location>
        <location evidence="1">cis-Golgi network</location>
    </subcellularLocation>
</comment>
<comment type="similarity">
    <text evidence="3">Belongs to the TMEM1 family.</text>
</comment>
<comment type="caution">
    <text evidence="3">The gene for this protein is duplicated in strains AX3 and AX4. These strains contain a duplication of a segment of 750 kb of chromosome 2 compared to the corresponding sequence in strain AX2.</text>
</comment>
<dbReference type="EMBL" id="AAFI02000011">
    <property type="protein sequence ID" value="EAL70550.1"/>
    <property type="molecule type" value="Genomic_DNA"/>
</dbReference>
<dbReference type="EMBL" id="AAFI02000009">
    <property type="protein sequence ID" value="EAL70822.1"/>
    <property type="molecule type" value="Genomic_DNA"/>
</dbReference>
<dbReference type="FunCoup" id="Q556Z3">
    <property type="interactions" value="18"/>
</dbReference>
<dbReference type="STRING" id="44689.Q556Z3"/>
<dbReference type="PaxDb" id="44689-DDB0231693"/>
<dbReference type="EnsemblProtists" id="EAL70550">
    <property type="protein sequence ID" value="EAL70550"/>
    <property type="gene ID" value="DDB_G0273719"/>
</dbReference>
<dbReference type="EnsemblProtists" id="EAL70822">
    <property type="protein sequence ID" value="EAL70822"/>
    <property type="gene ID" value="DDB_G0273209"/>
</dbReference>
<dbReference type="KEGG" id="ddi:DDB_G0273209"/>
<dbReference type="KEGG" id="ddi:DDB_G0273719"/>
<dbReference type="dictyBase" id="DDB_G0273209">
    <property type="gene designation" value="trappc10-1"/>
</dbReference>
<dbReference type="dictyBase" id="DDB_G0273719">
    <property type="gene designation" value="trappc10-2"/>
</dbReference>
<dbReference type="VEuPathDB" id="AmoebaDB:DDB_G0273719"/>
<dbReference type="eggNOG" id="KOG1931">
    <property type="taxonomic scope" value="Eukaryota"/>
</dbReference>
<dbReference type="HOGENOM" id="CLU_006790_0_0_1"/>
<dbReference type="InParanoid" id="Q556Z3"/>
<dbReference type="OMA" id="FFKHENY"/>
<dbReference type="Reactome" id="R-DDI-204005">
    <property type="pathway name" value="COPII-mediated vesicle transport"/>
</dbReference>
<dbReference type="Reactome" id="R-DDI-8876198">
    <property type="pathway name" value="RAB GEFs exchange GTP for GDP on RABs"/>
</dbReference>
<dbReference type="PRO" id="PR:Q556Z3"/>
<dbReference type="Proteomes" id="UP000002195">
    <property type="component" value="Chromosome 2"/>
</dbReference>
<dbReference type="GO" id="GO:0005829">
    <property type="term" value="C:cytosol"/>
    <property type="evidence" value="ECO:0007669"/>
    <property type="project" value="GOC"/>
</dbReference>
<dbReference type="GO" id="GO:1990071">
    <property type="term" value="C:TRAPPII protein complex"/>
    <property type="evidence" value="ECO:0000318"/>
    <property type="project" value="GO_Central"/>
</dbReference>
<dbReference type="GO" id="GO:0034498">
    <property type="term" value="P:early endosome to Golgi transport"/>
    <property type="evidence" value="ECO:0000318"/>
    <property type="project" value="GO_Central"/>
</dbReference>
<dbReference type="GO" id="GO:0006891">
    <property type="term" value="P:intra-Golgi vesicle-mediated transport"/>
    <property type="evidence" value="ECO:0000318"/>
    <property type="project" value="GO_Central"/>
</dbReference>
<dbReference type="InterPro" id="IPR022233">
    <property type="entry name" value="TRAPP_II_complex_TRAPPC10_C"/>
</dbReference>
<dbReference type="InterPro" id="IPR045126">
    <property type="entry name" value="TRAPPC10/Trs130"/>
</dbReference>
<dbReference type="InterPro" id="IPR056913">
    <property type="entry name" value="TRAPPC10/Trs130_N"/>
</dbReference>
<dbReference type="PANTHER" id="PTHR13251">
    <property type="entry name" value="EPILEPSY HOLOPROSENCEPHALY CANDIDATE 1/TMEM1"/>
    <property type="match status" value="1"/>
</dbReference>
<dbReference type="PANTHER" id="PTHR13251:SF3">
    <property type="entry name" value="TRAFFICKING PROTEIN PARTICLE COMPLEX SUBUNIT 10"/>
    <property type="match status" value="1"/>
</dbReference>
<dbReference type="Pfam" id="PF12584">
    <property type="entry name" value="TRAPPC10"/>
    <property type="match status" value="1"/>
</dbReference>
<dbReference type="Pfam" id="PF23036">
    <property type="entry name" value="TRAPPC10_1st"/>
    <property type="match status" value="2"/>
</dbReference>
<sequence>MSNVSPNSMNLNGSTSSTASVNDSGGGGGGGNVTSPTLSSSSASSISNSNSSSSNNLKPSTQPLSSSSTLNTPTQFSLQHSSSSSSLNNTNIDIIEHITISYQDESSIWKYIEAELPNHLPLKNISWKTKTGHTKVVEKMPIEILQYNDERVKAHYDNQNLYKKPYLYLYLVHCDDPDTYKNVVRAKIKQWVTQMTERQQEWLIVYVSLGPKRFSELTSKLTRTVFDRIKNDFNVKRDRCCQLRFLDTNNTSSGNNKDKDNDNGGGSSGTGLSTSTKQQDDLWDDFLIKMKEGIISSAEQYLTTYEDEIRKMDAKRTTPGWSYQNFFFIKEGLALIYERAQLYEDALMQYFELEVLFGDPNNRSQFDQITDEVLQPNSIHCNGNILDTSFKNYRKLIYENKISLFDFKVYLFARQSKLLFLLQKPIEAATKSISFITSMSMIIKQYPNSFAPMFKESWIFSTSMELIKACQDSFDKIVNGAQQQQQQQQQQLQLQQQLQQQQQQQTINGSAQKVVKSISSTTPISKLFGAFGPFGSSSSNTPSSTSATTAANGKNTPMPSNSGIASLSAGGSTIIAGLSGSQSLNNLQSAQLSGALNTQHYIRTPSLNLTSDLSERLTEKQDRESLDFLVGDLLFSSAQRLEELAIIIGYLPVDDYNSEMFFQNVEEVIFKSVENKKIEVDSMTAFSYQPLQVSLQSSKQFTQLYFELLGQIEKLYIQSNRMRSISRLTFAIANLNFKLKEFQIAENLFKSISNLYSREHWSYIEYAVKTRLSYCQKQLGHLVDYVTTCVGLLAPGLLTNRFEKDHYLSEIIQISRKPELNIVQPMIPLFKCKVTFKETVYRYFETIKINVRIKSNLISPIRFNNGAVSFVKSGFGDKLVFQLNDFLVEPGVNNFQFTAVGTTKATFVKDSIWLKIDNLSFGYSLRNADTAIGGGGGGTNTTTTTLPGEIKVIDSESQITLESFANSPLLFYSIQYVGIKLHTHSDTIEAGVLTFTSPTGATIIPTSSVIIIQSDDKTCETSSRTINLINDKLPLSQIGYNQTLEFYLPLMAVNTDTCTHQIRIELQHQKQTKEKFSSSLVSSILFINPLTIDESVINVNNRLFLKTIIQCNSPNMIQFNSYSLEGCDSEYQSPEQQQLQQQLQQQQQLSLSSSSSSISSISSKSSQQPNLYYLVKDHNHSLAPNLNLYPGQLVSLIFEIKKYENESLSSSTSPSSATDSSNSNGNNNNNNNNNNHSKNDLKLKIKYTSKMPQQDLDRPLIRECKSLWRDQNEFSWPIKIELPTYLYQIDLSIQSRAYVGTIVLFEIEITNLKQQQQQQKESNNDNGNEKQQKQQQLQYHIVADSQIWMISGKSKHTFSFNSDTVGEKLKFSCGLIPISSGSLPIPKVTLVGINNSNISYPKTKNEKIFVYPSPQIYSCHQLQDNNNNNNNSINSQTSTNKT</sequence>